<proteinExistence type="evidence at transcript level"/>
<accession>Q52R91</accession>
<feature type="signal peptide" evidence="1">
    <location>
        <begin position="1"/>
        <end position="24"/>
    </location>
</feature>
<feature type="chain" id="PRO_0000042876" description="Glycoprotein hormones alpha chain">
    <location>
        <begin position="25"/>
        <end position="120"/>
    </location>
</feature>
<feature type="glycosylation site" description="N-linked (GlcNAc...) asparagine" evidence="2">
    <location>
        <position position="80"/>
    </location>
</feature>
<feature type="glycosylation site" description="N-linked (GlcNAc...) asparagine" evidence="2">
    <location>
        <position position="106"/>
    </location>
</feature>
<feature type="disulfide bond" evidence="2">
    <location>
        <begin position="35"/>
        <end position="59"/>
    </location>
</feature>
<feature type="disulfide bond" evidence="2">
    <location>
        <begin position="38"/>
        <end position="88"/>
    </location>
</feature>
<feature type="disulfide bond" evidence="2">
    <location>
        <begin position="56"/>
        <end position="110"/>
    </location>
</feature>
<feature type="disulfide bond" evidence="2">
    <location>
        <begin position="60"/>
        <end position="112"/>
    </location>
</feature>
<feature type="disulfide bond" evidence="2">
    <location>
        <begin position="87"/>
        <end position="115"/>
    </location>
</feature>
<sequence>MDYYRKYAAVILAILSVFLHILHSFPDGEFTMQGCPECKLKENKYFSKLGAPIYQCMGCCFSRAYPTPARSKKTMLVPKNITSEATCCVAKAFTKATVMGNAKVENHTECHCSTCYHHKI</sequence>
<dbReference type="EMBL" id="AY972823">
    <property type="protein sequence ID" value="AAX85430.1"/>
    <property type="molecule type" value="mRNA"/>
</dbReference>
<dbReference type="RefSeq" id="NP_001041623.1">
    <property type="nucleotide sequence ID" value="NM_001048158.1"/>
</dbReference>
<dbReference type="SMR" id="Q52R91"/>
<dbReference type="STRING" id="9685.ENSFCAP00000026704"/>
<dbReference type="GlyCosmos" id="Q52R91">
    <property type="glycosylation" value="2 sites, No reported glycans"/>
</dbReference>
<dbReference type="PaxDb" id="9685-ENSFCAP00000023015"/>
<dbReference type="GeneID" id="751819"/>
<dbReference type="KEGG" id="fca:751819"/>
<dbReference type="CTD" id="1081"/>
<dbReference type="eggNOG" id="ENOG502S1PK">
    <property type="taxonomic scope" value="Eukaryota"/>
</dbReference>
<dbReference type="InParanoid" id="Q52R91"/>
<dbReference type="OrthoDB" id="9852859at2759"/>
<dbReference type="Proteomes" id="UP000011712">
    <property type="component" value="Unplaced"/>
</dbReference>
<dbReference type="GO" id="GO:0005615">
    <property type="term" value="C:extracellular space"/>
    <property type="evidence" value="ECO:0000250"/>
    <property type="project" value="UniProtKB"/>
</dbReference>
<dbReference type="GO" id="GO:0016914">
    <property type="term" value="C:follicle-stimulating hormone complex"/>
    <property type="evidence" value="ECO:0000250"/>
    <property type="project" value="UniProtKB"/>
</dbReference>
<dbReference type="GO" id="GO:0016913">
    <property type="term" value="F:follicle-stimulating hormone activity"/>
    <property type="evidence" value="ECO:0000250"/>
    <property type="project" value="UniProtKB"/>
</dbReference>
<dbReference type="GO" id="GO:0007186">
    <property type="term" value="P:G protein-coupled receptor signaling pathway"/>
    <property type="evidence" value="ECO:0000250"/>
    <property type="project" value="UniProtKB"/>
</dbReference>
<dbReference type="GO" id="GO:0010893">
    <property type="term" value="P:positive regulation of steroid biosynthetic process"/>
    <property type="evidence" value="ECO:0000250"/>
    <property type="project" value="UniProtKB"/>
</dbReference>
<dbReference type="GO" id="GO:0010469">
    <property type="term" value="P:regulation of signaling receptor activity"/>
    <property type="evidence" value="ECO:0000250"/>
    <property type="project" value="UniProtKB"/>
</dbReference>
<dbReference type="GO" id="GO:0006590">
    <property type="term" value="P:thyroid hormone generation"/>
    <property type="evidence" value="ECO:0000318"/>
    <property type="project" value="GO_Central"/>
</dbReference>
<dbReference type="FunFam" id="2.10.90.10:FF:000011">
    <property type="entry name" value="Glycoprotein hormones alpha chain"/>
    <property type="match status" value="1"/>
</dbReference>
<dbReference type="Gene3D" id="2.10.90.10">
    <property type="entry name" value="Cystine-knot cytokines"/>
    <property type="match status" value="1"/>
</dbReference>
<dbReference type="InterPro" id="IPR029034">
    <property type="entry name" value="Cystine-knot_cytokine"/>
</dbReference>
<dbReference type="InterPro" id="IPR000476">
    <property type="entry name" value="Glyco_hormone"/>
</dbReference>
<dbReference type="PANTHER" id="PTHR11509">
    <property type="entry name" value="GLYCOPROTEIN HORMONE ALPHA CHAIN"/>
    <property type="match status" value="1"/>
</dbReference>
<dbReference type="PANTHER" id="PTHR11509:SF0">
    <property type="entry name" value="GLYCOPROTEIN HORMONES ALPHA CHAIN"/>
    <property type="match status" value="1"/>
</dbReference>
<dbReference type="Pfam" id="PF00236">
    <property type="entry name" value="Hormone_6"/>
    <property type="match status" value="1"/>
</dbReference>
<dbReference type="PRINTS" id="PR00274">
    <property type="entry name" value="GLYCOHORMONE"/>
</dbReference>
<dbReference type="SMART" id="SM00067">
    <property type="entry name" value="GHA"/>
    <property type="match status" value="1"/>
</dbReference>
<dbReference type="SUPFAM" id="SSF57501">
    <property type="entry name" value="Cystine-knot cytokines"/>
    <property type="match status" value="1"/>
</dbReference>
<dbReference type="PROSITE" id="PS00779">
    <property type="entry name" value="GLYCO_HORMONE_ALPHA_1"/>
    <property type="match status" value="1"/>
</dbReference>
<dbReference type="PROSITE" id="PS00780">
    <property type="entry name" value="GLYCO_HORMONE_ALPHA_2"/>
    <property type="match status" value="1"/>
</dbReference>
<dbReference type="PROSITE" id="PS50277">
    <property type="entry name" value="GLYCO_HORMONE_ALPHA_3"/>
    <property type="match status" value="1"/>
</dbReference>
<evidence type="ECO:0000250" key="1"/>
<evidence type="ECO:0000250" key="2">
    <source>
        <dbReference type="UniProtKB" id="P01215"/>
    </source>
</evidence>
<evidence type="ECO:0000305" key="3"/>
<gene>
    <name type="primary">CGA</name>
</gene>
<organism>
    <name type="scientific">Felis catus</name>
    <name type="common">Cat</name>
    <name type="synonym">Felis silvestris catus</name>
    <dbReference type="NCBI Taxonomy" id="9685"/>
    <lineage>
        <taxon>Eukaryota</taxon>
        <taxon>Metazoa</taxon>
        <taxon>Chordata</taxon>
        <taxon>Craniata</taxon>
        <taxon>Vertebrata</taxon>
        <taxon>Euteleostomi</taxon>
        <taxon>Mammalia</taxon>
        <taxon>Eutheria</taxon>
        <taxon>Laurasiatheria</taxon>
        <taxon>Carnivora</taxon>
        <taxon>Feliformia</taxon>
        <taxon>Felidae</taxon>
        <taxon>Felinae</taxon>
        <taxon>Felis</taxon>
    </lineage>
</organism>
<comment type="function">
    <text evidence="2">Shared alpha chain of the active heterodimeric glycoprotein hormones thyrotropin/thyroid stimulating hormone/TSH, lutropin/luteinizing hormone/LH and follitropin/follicle stimulating hormone/FSH. These hormones bind specific receptors on target cells that in turn activate downstream signaling pathways.</text>
</comment>
<comment type="subunit">
    <text evidence="2">Heterodimer. The active hormones thyrotropin, lutropin and follitropin are heterodimers composed of CGA, a common alpha chain described here and a unique beta chain which confers their biological specificity to the hormones: TSHB for thyrotropin, LHB for lutropin and FSHB for follitropin.</text>
</comment>
<comment type="subcellular location">
    <subcellularLocation>
        <location evidence="2">Secreted</location>
    </subcellularLocation>
</comment>
<comment type="similarity">
    <text evidence="3">Belongs to the glycoprotein hormones subunit alpha family.</text>
</comment>
<keyword id="KW-1015">Disulfide bond</keyword>
<keyword id="KW-0325">Glycoprotein</keyword>
<keyword id="KW-0372">Hormone</keyword>
<keyword id="KW-1185">Reference proteome</keyword>
<keyword id="KW-0964">Secreted</keyword>
<keyword id="KW-0732">Signal</keyword>
<protein>
    <recommendedName>
        <fullName>Glycoprotein hormones alpha chain</fullName>
    </recommendedName>
    <alternativeName>
        <fullName>Anterior pituitary glycoprotein hormones common subunit alpha</fullName>
    </alternativeName>
    <alternativeName>
        <fullName>Follicle-stimulating hormone alpha chain</fullName>
        <shortName>FSH-alpha</shortName>
    </alternativeName>
    <alternativeName>
        <fullName>Follitropin alpha chain</fullName>
    </alternativeName>
    <alternativeName>
        <fullName>Luteinizing hormone alpha chain</fullName>
        <shortName>LSH-alpha</shortName>
    </alternativeName>
    <alternativeName>
        <fullName>Lutropin alpha chain</fullName>
    </alternativeName>
    <alternativeName>
        <fullName>Thyroid-stimulating hormone alpha chain</fullName>
        <shortName>TSH-alpha</shortName>
    </alternativeName>
    <alternativeName>
        <fullName>Thyrotropin alpha chain</fullName>
    </alternativeName>
</protein>
<name>GLHA_FELCA</name>
<reference key="1">
    <citation type="journal article" date="2006" name="Domest. Anim. Endocrinol.">
        <title>Cloning and sequencing of feline thyrotropin (fTSH): heterodimeric and yoked constructs.</title>
        <authorList>
            <person name="Rayalam S."/>
            <person name="Eizenstat L.D."/>
            <person name="Hoenig M."/>
            <person name="Ferguson D.C."/>
        </authorList>
    </citation>
    <scope>NUCLEOTIDE SEQUENCE [MRNA]</scope>
</reference>